<comment type="function">
    <text evidence="1">This is one of the proteins that bind and probably mediate the attachment of the 5S RNA into the large ribosomal subunit, where it forms part of the central protuberance.</text>
</comment>
<comment type="subunit">
    <text evidence="1">Part of the 50S ribosomal subunit. Contacts the 5S and 23S rRNAs.</text>
</comment>
<comment type="similarity">
    <text evidence="1">Belongs to the universal ribosomal protein uL18 family.</text>
</comment>
<protein>
    <recommendedName>
        <fullName evidence="1">Large ribosomal subunit protein uL18</fullName>
    </recommendedName>
    <alternativeName>
        <fullName evidence="2">50S ribosomal protein L18</fullName>
    </alternativeName>
</protein>
<organism>
    <name type="scientific">Methanosphaerula palustris (strain ATCC BAA-1556 / DSM 19958 / E1-9c)</name>
    <dbReference type="NCBI Taxonomy" id="521011"/>
    <lineage>
        <taxon>Archaea</taxon>
        <taxon>Methanobacteriati</taxon>
        <taxon>Methanobacteriota</taxon>
        <taxon>Stenosarchaea group</taxon>
        <taxon>Methanomicrobia</taxon>
        <taxon>Methanomicrobiales</taxon>
        <taxon>Methanoregulaceae</taxon>
        <taxon>Methanosphaerula</taxon>
    </lineage>
</organism>
<gene>
    <name evidence="1" type="primary">rpl18</name>
    <name type="ordered locus">Mpal_0461</name>
</gene>
<keyword id="KW-1185">Reference proteome</keyword>
<keyword id="KW-0687">Ribonucleoprotein</keyword>
<keyword id="KW-0689">Ribosomal protein</keyword>
<keyword id="KW-0694">RNA-binding</keyword>
<keyword id="KW-0699">rRNA-binding</keyword>
<proteinExistence type="inferred from homology"/>
<reference key="1">
    <citation type="journal article" date="2015" name="Genome Announc.">
        <title>Complete Genome Sequence of Methanosphaerula palustris E1-9CT, a Hydrogenotrophic Methanogen Isolated from a Minerotrophic Fen Peatland.</title>
        <authorList>
            <person name="Cadillo-Quiroz H."/>
            <person name="Browne P."/>
            <person name="Kyrpides N."/>
            <person name="Woyke T."/>
            <person name="Goodwin L."/>
            <person name="Detter C."/>
            <person name="Yavitt J.B."/>
            <person name="Zinder S.H."/>
        </authorList>
    </citation>
    <scope>NUCLEOTIDE SEQUENCE [LARGE SCALE GENOMIC DNA]</scope>
    <source>
        <strain>ATCC BAA-1556 / DSM 19958 / E1-9c</strain>
    </source>
</reference>
<dbReference type="EMBL" id="CP001338">
    <property type="protein sequence ID" value="ACL15835.1"/>
    <property type="molecule type" value="Genomic_DNA"/>
</dbReference>
<dbReference type="RefSeq" id="WP_012617154.1">
    <property type="nucleotide sequence ID" value="NC_011832.1"/>
</dbReference>
<dbReference type="SMR" id="B8GKF2"/>
<dbReference type="STRING" id="521011.Mpal_0461"/>
<dbReference type="GeneID" id="7272785"/>
<dbReference type="KEGG" id="mpl:Mpal_0461"/>
<dbReference type="eggNOG" id="arCOG04088">
    <property type="taxonomic scope" value="Archaea"/>
</dbReference>
<dbReference type="HOGENOM" id="CLU_056222_2_0_2"/>
<dbReference type="OrthoDB" id="8644at2157"/>
<dbReference type="Proteomes" id="UP000002457">
    <property type="component" value="Chromosome"/>
</dbReference>
<dbReference type="GO" id="GO:0022625">
    <property type="term" value="C:cytosolic large ribosomal subunit"/>
    <property type="evidence" value="ECO:0007669"/>
    <property type="project" value="TreeGrafter"/>
</dbReference>
<dbReference type="GO" id="GO:0008097">
    <property type="term" value="F:5S rRNA binding"/>
    <property type="evidence" value="ECO:0007669"/>
    <property type="project" value="InterPro"/>
</dbReference>
<dbReference type="GO" id="GO:0003735">
    <property type="term" value="F:structural constituent of ribosome"/>
    <property type="evidence" value="ECO:0007669"/>
    <property type="project" value="InterPro"/>
</dbReference>
<dbReference type="GO" id="GO:0000027">
    <property type="term" value="P:ribosomal large subunit assembly"/>
    <property type="evidence" value="ECO:0007669"/>
    <property type="project" value="TreeGrafter"/>
</dbReference>
<dbReference type="GO" id="GO:0006412">
    <property type="term" value="P:translation"/>
    <property type="evidence" value="ECO:0007669"/>
    <property type="project" value="UniProtKB-UniRule"/>
</dbReference>
<dbReference type="CDD" id="cd00432">
    <property type="entry name" value="Ribosomal_L18_L5e"/>
    <property type="match status" value="1"/>
</dbReference>
<dbReference type="Gene3D" id="3.30.420.100">
    <property type="match status" value="1"/>
</dbReference>
<dbReference type="HAMAP" id="MF_01337_A">
    <property type="entry name" value="Ribosomal_uL18_A"/>
    <property type="match status" value="1"/>
</dbReference>
<dbReference type="InterPro" id="IPR005485">
    <property type="entry name" value="Rbsml_uL18_euk"/>
</dbReference>
<dbReference type="NCBIfam" id="NF006342">
    <property type="entry name" value="PRK08569.1"/>
    <property type="match status" value="1"/>
</dbReference>
<dbReference type="PANTHER" id="PTHR23410:SF12">
    <property type="entry name" value="LARGE RIBOSOMAL SUBUNIT PROTEIN UL18"/>
    <property type="match status" value="1"/>
</dbReference>
<dbReference type="PANTHER" id="PTHR23410">
    <property type="entry name" value="RIBOSOMAL PROTEIN L5-RELATED"/>
    <property type="match status" value="1"/>
</dbReference>
<dbReference type="Pfam" id="PF17144">
    <property type="entry name" value="Ribosomal_L5e"/>
    <property type="match status" value="2"/>
</dbReference>
<dbReference type="SUPFAM" id="SSF53137">
    <property type="entry name" value="Translational machinery components"/>
    <property type="match status" value="1"/>
</dbReference>
<name>RL18_METPE</name>
<accession>B8GKF2</accession>
<sequence length="175" mass="19087">MAVGPRYFVPFRRRREGKTDYYKRGKLIVAEQPRMVVRKTNRHIIVQMIVAEMEGDKTLVTANSAELLDYGYKGSTSNTPAAYLTGMLFAVKALNADHPAAILDIGLNRATYGAKVFAALKGAVEAGLDVPHGEEILPADERVKGEHIAAYAPDRAGDLVENVESAAQTIMKELA</sequence>
<evidence type="ECO:0000255" key="1">
    <source>
        <dbReference type="HAMAP-Rule" id="MF_01337"/>
    </source>
</evidence>
<evidence type="ECO:0000305" key="2"/>
<feature type="chain" id="PRO_1000166240" description="Large ribosomal subunit protein uL18">
    <location>
        <begin position="1"/>
        <end position="175"/>
    </location>
</feature>